<name>RECF_DESHD</name>
<reference key="1">
    <citation type="journal article" date="2012" name="BMC Microbiol.">
        <title>Genome sequence of Desulfitobacterium hafniense DCB-2, a Gram-positive anaerobe capable of dehalogenation and metal reduction.</title>
        <authorList>
            <person name="Kim S.H."/>
            <person name="Harzman C."/>
            <person name="Davis J.K."/>
            <person name="Hutcheson R."/>
            <person name="Broderick J.B."/>
            <person name="Marsh T.L."/>
            <person name="Tiedje J.M."/>
        </authorList>
    </citation>
    <scope>NUCLEOTIDE SEQUENCE [LARGE SCALE GENOMIC DNA]</scope>
    <source>
        <strain>DSM 10664 / DCB-2</strain>
    </source>
</reference>
<feature type="chain" id="PRO_1000133685" description="DNA replication and repair protein RecF">
    <location>
        <begin position="1"/>
        <end position="365"/>
    </location>
</feature>
<feature type="binding site" evidence="1">
    <location>
        <begin position="30"/>
        <end position="37"/>
    </location>
    <ligand>
        <name>ATP</name>
        <dbReference type="ChEBI" id="CHEBI:30616"/>
    </ligand>
</feature>
<dbReference type="EMBL" id="CP001336">
    <property type="protein sequence ID" value="ACL18073.1"/>
    <property type="molecule type" value="Genomic_DNA"/>
</dbReference>
<dbReference type="RefSeq" id="WP_005815135.1">
    <property type="nucleotide sequence ID" value="NC_011830.1"/>
</dbReference>
<dbReference type="SMR" id="B8FXW8"/>
<dbReference type="KEGG" id="dhd:Dhaf_0003"/>
<dbReference type="HOGENOM" id="CLU_040267_0_1_9"/>
<dbReference type="Proteomes" id="UP000007726">
    <property type="component" value="Chromosome"/>
</dbReference>
<dbReference type="GO" id="GO:0005737">
    <property type="term" value="C:cytoplasm"/>
    <property type="evidence" value="ECO:0007669"/>
    <property type="project" value="UniProtKB-SubCell"/>
</dbReference>
<dbReference type="GO" id="GO:0005524">
    <property type="term" value="F:ATP binding"/>
    <property type="evidence" value="ECO:0007669"/>
    <property type="project" value="UniProtKB-UniRule"/>
</dbReference>
<dbReference type="GO" id="GO:0003697">
    <property type="term" value="F:single-stranded DNA binding"/>
    <property type="evidence" value="ECO:0007669"/>
    <property type="project" value="UniProtKB-UniRule"/>
</dbReference>
<dbReference type="GO" id="GO:0006260">
    <property type="term" value="P:DNA replication"/>
    <property type="evidence" value="ECO:0007669"/>
    <property type="project" value="UniProtKB-UniRule"/>
</dbReference>
<dbReference type="GO" id="GO:0000731">
    <property type="term" value="P:DNA synthesis involved in DNA repair"/>
    <property type="evidence" value="ECO:0007669"/>
    <property type="project" value="TreeGrafter"/>
</dbReference>
<dbReference type="GO" id="GO:0006302">
    <property type="term" value="P:double-strand break repair"/>
    <property type="evidence" value="ECO:0007669"/>
    <property type="project" value="TreeGrafter"/>
</dbReference>
<dbReference type="GO" id="GO:0009432">
    <property type="term" value="P:SOS response"/>
    <property type="evidence" value="ECO:0007669"/>
    <property type="project" value="UniProtKB-UniRule"/>
</dbReference>
<dbReference type="CDD" id="cd03242">
    <property type="entry name" value="ABC_RecF"/>
    <property type="match status" value="1"/>
</dbReference>
<dbReference type="Gene3D" id="3.40.50.300">
    <property type="entry name" value="P-loop containing nucleotide triphosphate hydrolases"/>
    <property type="match status" value="1"/>
</dbReference>
<dbReference type="Gene3D" id="1.20.1050.90">
    <property type="entry name" value="RecF/RecN/SMC, N-terminal domain"/>
    <property type="match status" value="1"/>
</dbReference>
<dbReference type="HAMAP" id="MF_00365">
    <property type="entry name" value="RecF"/>
    <property type="match status" value="1"/>
</dbReference>
<dbReference type="InterPro" id="IPR001238">
    <property type="entry name" value="DNA-binding_RecF"/>
</dbReference>
<dbReference type="InterPro" id="IPR018078">
    <property type="entry name" value="DNA-binding_RecF_CS"/>
</dbReference>
<dbReference type="InterPro" id="IPR027417">
    <property type="entry name" value="P-loop_NTPase"/>
</dbReference>
<dbReference type="InterPro" id="IPR003395">
    <property type="entry name" value="RecF/RecN/SMC_N"/>
</dbReference>
<dbReference type="InterPro" id="IPR042174">
    <property type="entry name" value="RecF_2"/>
</dbReference>
<dbReference type="NCBIfam" id="TIGR00611">
    <property type="entry name" value="recf"/>
    <property type="match status" value="1"/>
</dbReference>
<dbReference type="PANTHER" id="PTHR32182">
    <property type="entry name" value="DNA REPLICATION AND REPAIR PROTEIN RECF"/>
    <property type="match status" value="1"/>
</dbReference>
<dbReference type="PANTHER" id="PTHR32182:SF0">
    <property type="entry name" value="DNA REPLICATION AND REPAIR PROTEIN RECF"/>
    <property type="match status" value="1"/>
</dbReference>
<dbReference type="Pfam" id="PF02463">
    <property type="entry name" value="SMC_N"/>
    <property type="match status" value="1"/>
</dbReference>
<dbReference type="SUPFAM" id="SSF52540">
    <property type="entry name" value="P-loop containing nucleoside triphosphate hydrolases"/>
    <property type="match status" value="1"/>
</dbReference>
<dbReference type="PROSITE" id="PS00618">
    <property type="entry name" value="RECF_2"/>
    <property type="match status" value="1"/>
</dbReference>
<sequence>MEIKWLHLKSFRNYQDQEVDFRPGLTILQGENGQGKTNILEGIYYLLTGKSYRVHREQELARWGENEFHLYGDFIVQRRKLRLESHYQDKRKIIKINQIPCRKLSEYVGTINVVFFSPDDLVMVKGGPAERRRFLDLHIAQHHSKHIQLLNAYNKVLQQKNALLKQGQGGSKSQIAQIELWNEQILRIGSEIIRNRWEFTGLLSRKGQEIYGQISSGKEELTMDYHALGKNNLEEALAAFPKLLAEKMSLEMERKMVLIGPHRDDILFKLNERSARLYGSQGQQRSIVLSTKLAELEVIRQEKGDYPLLLLDDVLSELDRFRRDYLLDYTKSLQQTIMTMTSAETLTQRASLLLKVEKGQIGRIE</sequence>
<protein>
    <recommendedName>
        <fullName evidence="1">DNA replication and repair protein RecF</fullName>
    </recommendedName>
</protein>
<gene>
    <name evidence="1" type="primary">recF</name>
    <name type="ordered locus">Dhaf_0003</name>
</gene>
<organism>
    <name type="scientific">Desulfitobacterium hafniense (strain DSM 10664 / DCB-2)</name>
    <dbReference type="NCBI Taxonomy" id="272564"/>
    <lineage>
        <taxon>Bacteria</taxon>
        <taxon>Bacillati</taxon>
        <taxon>Bacillota</taxon>
        <taxon>Clostridia</taxon>
        <taxon>Eubacteriales</taxon>
        <taxon>Desulfitobacteriaceae</taxon>
        <taxon>Desulfitobacterium</taxon>
    </lineage>
</organism>
<keyword id="KW-0067">ATP-binding</keyword>
<keyword id="KW-0963">Cytoplasm</keyword>
<keyword id="KW-0227">DNA damage</keyword>
<keyword id="KW-0234">DNA repair</keyword>
<keyword id="KW-0235">DNA replication</keyword>
<keyword id="KW-0238">DNA-binding</keyword>
<keyword id="KW-0547">Nucleotide-binding</keyword>
<keyword id="KW-0742">SOS response</keyword>
<comment type="function">
    <text evidence="1">The RecF protein is involved in DNA metabolism; it is required for DNA replication and normal SOS inducibility. RecF binds preferentially to single-stranded, linear DNA. It also seems to bind ATP.</text>
</comment>
<comment type="subcellular location">
    <subcellularLocation>
        <location evidence="1">Cytoplasm</location>
    </subcellularLocation>
</comment>
<comment type="similarity">
    <text evidence="1">Belongs to the RecF family.</text>
</comment>
<evidence type="ECO:0000255" key="1">
    <source>
        <dbReference type="HAMAP-Rule" id="MF_00365"/>
    </source>
</evidence>
<accession>B8FXW8</accession>
<proteinExistence type="inferred from homology"/>